<gene>
    <name evidence="1" type="primary">secA</name>
    <name type="ordered locus">CKO_03277</name>
</gene>
<name>SECA_CITK8</name>
<reference key="1">
    <citation type="submission" date="2007-08" db="EMBL/GenBank/DDBJ databases">
        <authorList>
            <consortium name="The Citrobacter koseri Genome Sequencing Project"/>
            <person name="McClelland M."/>
            <person name="Sanderson E.K."/>
            <person name="Porwollik S."/>
            <person name="Spieth J."/>
            <person name="Clifton W.S."/>
            <person name="Latreille P."/>
            <person name="Courtney L."/>
            <person name="Wang C."/>
            <person name="Pepin K."/>
            <person name="Bhonagiri V."/>
            <person name="Nash W."/>
            <person name="Johnson M."/>
            <person name="Thiruvilangam P."/>
            <person name="Wilson R."/>
        </authorList>
    </citation>
    <scope>NUCLEOTIDE SEQUENCE [LARGE SCALE GENOMIC DNA]</scope>
    <source>
        <strain>ATCC BAA-895 / CDC 4225-83 / SGSC4696</strain>
    </source>
</reference>
<organism>
    <name type="scientific">Citrobacter koseri (strain ATCC BAA-895 / CDC 4225-83 / SGSC4696)</name>
    <dbReference type="NCBI Taxonomy" id="290338"/>
    <lineage>
        <taxon>Bacteria</taxon>
        <taxon>Pseudomonadati</taxon>
        <taxon>Pseudomonadota</taxon>
        <taxon>Gammaproteobacteria</taxon>
        <taxon>Enterobacterales</taxon>
        <taxon>Enterobacteriaceae</taxon>
        <taxon>Citrobacter</taxon>
    </lineage>
</organism>
<sequence length="901" mass="101750">MLIKLLTKVFGSRNDRTLRRMRKAVGIINAMEPEMEKLSDDELKGKTAEFRVRLEKGESVESLIPEAFAVVREASKRVFGMRHFDVQLLGGMVLNDRCIAEMRTGEGKTLTATLPAYLNALSGKGVHVVTVNDYLAQRDAENNRPLFEFLGMSVGINLPGMPAPAKREAYAADITYGTNNEYGFDYLRDNMAFSPEERVQRKLHYALVDEVDSILIDEARTPLIISGPAEDSSEMYKKVNKIIPHLIRQEKEDSDTFQGEGHFSVDEKARQVNLTERGLVLIEELLVKEGIMDEGESLYSPGNIMLMHHVTAALRAHALFTRDVDYIVKDGEVIIVDEHTGRTMQGRRWSDGLHQAVEAKEGVEIQNENQTLASITFQNYFRLYEKLAGMTGTADTEAFEFSSIYKLDTVVVPTNRPMIRKDMPDLVYMTEAEKIQAIIEDIKERTANGQPVLVGTISIEKSEVVSNELTKAGIKHNVLNAKFHANEAAIVAQAGYPAAVTIATNMAGRGTDIVLGGSWQAEVAELENPTPEQIAQIKADWQVRHEAVLASGGLHIIGTERHESRRIDNQLRGRSGRQGDAGSSRFYLSMEDALMRIFASDRVSGMMRKLGMKPGEAIEHPWVTKAIANAQRKVESRNFDIRKQLLEYDDVANDQRRAIYTQRNELLDVSDVSETINSIREDVFKVTIDAYIPPQSLEEMWDIPGLQERLKNDFDLDMPIAEWLDKEPELHEETLRERILAHSIEVYQRKEEVVGAEMMRHFEKGVMLQTLDSLWKEHLAAMDYLRQGIHLRGYAQKDPKQEYKRESFSMFAAMLESLKYEVVSTLSKVQVRMPEEVEAMEQQRREEAERLAQMQQLSHQDDDSAAAAALAAQTGDRKVGRNDPCPCGSGKKYKQCHGRLS</sequence>
<proteinExistence type="inferred from homology"/>
<evidence type="ECO:0000255" key="1">
    <source>
        <dbReference type="HAMAP-Rule" id="MF_01382"/>
    </source>
</evidence>
<evidence type="ECO:0000256" key="2">
    <source>
        <dbReference type="SAM" id="MobiDB-lite"/>
    </source>
</evidence>
<feature type="chain" id="PRO_0000320775" description="Protein translocase subunit SecA">
    <location>
        <begin position="1"/>
        <end position="901"/>
    </location>
</feature>
<feature type="region of interest" description="Disordered" evidence="2">
    <location>
        <begin position="852"/>
        <end position="901"/>
    </location>
</feature>
<feature type="compositionally biased region" description="Basic residues" evidence="2">
    <location>
        <begin position="891"/>
        <end position="901"/>
    </location>
</feature>
<feature type="binding site" evidence="1">
    <location>
        <position position="87"/>
    </location>
    <ligand>
        <name>ATP</name>
        <dbReference type="ChEBI" id="CHEBI:30616"/>
    </ligand>
</feature>
<feature type="binding site" evidence="1">
    <location>
        <begin position="105"/>
        <end position="109"/>
    </location>
    <ligand>
        <name>ATP</name>
        <dbReference type="ChEBI" id="CHEBI:30616"/>
    </ligand>
</feature>
<feature type="binding site" evidence="1">
    <location>
        <position position="512"/>
    </location>
    <ligand>
        <name>ATP</name>
        <dbReference type="ChEBI" id="CHEBI:30616"/>
    </ligand>
</feature>
<feature type="binding site" evidence="1">
    <location>
        <position position="885"/>
    </location>
    <ligand>
        <name>Zn(2+)</name>
        <dbReference type="ChEBI" id="CHEBI:29105"/>
    </ligand>
</feature>
<feature type="binding site" evidence="1">
    <location>
        <position position="887"/>
    </location>
    <ligand>
        <name>Zn(2+)</name>
        <dbReference type="ChEBI" id="CHEBI:29105"/>
    </ligand>
</feature>
<feature type="binding site" evidence="1">
    <location>
        <position position="896"/>
    </location>
    <ligand>
        <name>Zn(2+)</name>
        <dbReference type="ChEBI" id="CHEBI:29105"/>
    </ligand>
</feature>
<feature type="binding site" evidence="1">
    <location>
        <position position="897"/>
    </location>
    <ligand>
        <name>Zn(2+)</name>
        <dbReference type="ChEBI" id="CHEBI:29105"/>
    </ligand>
</feature>
<comment type="function">
    <text evidence="1">Part of the Sec protein translocase complex. Interacts with the SecYEG preprotein conducting channel. Has a central role in coupling the hydrolysis of ATP to the transfer of proteins into and across the cell membrane, serving both as a receptor for the preprotein-SecB complex and as an ATP-driven molecular motor driving the stepwise translocation of polypeptide chains across the membrane.</text>
</comment>
<comment type="catalytic activity">
    <reaction evidence="1">
        <text>ATP + H2O + cellular proteinSide 1 = ADP + phosphate + cellular proteinSide 2.</text>
        <dbReference type="EC" id="7.4.2.8"/>
    </reaction>
</comment>
<comment type="cofactor">
    <cofactor evidence="1">
        <name>Zn(2+)</name>
        <dbReference type="ChEBI" id="CHEBI:29105"/>
    </cofactor>
    <text evidence="1">May bind 1 zinc ion per subunit.</text>
</comment>
<comment type="subunit">
    <text evidence="1">Monomer and homodimer. Part of the essential Sec protein translocation apparatus which comprises SecA, SecYEG and auxiliary proteins SecDF-YajC and YidC.</text>
</comment>
<comment type="subcellular location">
    <subcellularLocation>
        <location evidence="1">Cell inner membrane</location>
        <topology evidence="1">Peripheral membrane protein</topology>
        <orientation evidence="1">Cytoplasmic side</orientation>
    </subcellularLocation>
    <subcellularLocation>
        <location evidence="1">Cytoplasm</location>
    </subcellularLocation>
    <text evidence="1">Distribution is 50-50.</text>
</comment>
<comment type="induction">
    <text evidence="1">Repressed under conditions of excess protein secretion capacity and derepressed when protein secretion becomes limiting. This is regulated by SecM.</text>
</comment>
<comment type="similarity">
    <text evidence="1">Belongs to the SecA family.</text>
</comment>
<keyword id="KW-0067">ATP-binding</keyword>
<keyword id="KW-0997">Cell inner membrane</keyword>
<keyword id="KW-1003">Cell membrane</keyword>
<keyword id="KW-0963">Cytoplasm</keyword>
<keyword id="KW-0472">Membrane</keyword>
<keyword id="KW-0479">Metal-binding</keyword>
<keyword id="KW-0547">Nucleotide-binding</keyword>
<keyword id="KW-0653">Protein transport</keyword>
<keyword id="KW-1185">Reference proteome</keyword>
<keyword id="KW-1278">Translocase</keyword>
<keyword id="KW-0811">Translocation</keyword>
<keyword id="KW-0813">Transport</keyword>
<keyword id="KW-0862">Zinc</keyword>
<accession>A8ALJ8</accession>
<dbReference type="EC" id="7.4.2.8" evidence="1"/>
<dbReference type="EMBL" id="CP000822">
    <property type="protein sequence ID" value="ABV14361.1"/>
    <property type="molecule type" value="Genomic_DNA"/>
</dbReference>
<dbReference type="RefSeq" id="WP_012134066.1">
    <property type="nucleotide sequence ID" value="NC_009792.1"/>
</dbReference>
<dbReference type="SMR" id="A8ALJ8"/>
<dbReference type="STRING" id="290338.CKO_03277"/>
<dbReference type="GeneID" id="45137050"/>
<dbReference type="KEGG" id="cko:CKO_03277"/>
<dbReference type="HOGENOM" id="CLU_005314_3_0_6"/>
<dbReference type="OrthoDB" id="9805579at2"/>
<dbReference type="Proteomes" id="UP000008148">
    <property type="component" value="Chromosome"/>
</dbReference>
<dbReference type="GO" id="GO:0031522">
    <property type="term" value="C:cell envelope Sec protein transport complex"/>
    <property type="evidence" value="ECO:0007669"/>
    <property type="project" value="TreeGrafter"/>
</dbReference>
<dbReference type="GO" id="GO:0005829">
    <property type="term" value="C:cytosol"/>
    <property type="evidence" value="ECO:0007669"/>
    <property type="project" value="TreeGrafter"/>
</dbReference>
<dbReference type="GO" id="GO:0005886">
    <property type="term" value="C:plasma membrane"/>
    <property type="evidence" value="ECO:0007669"/>
    <property type="project" value="UniProtKB-SubCell"/>
</dbReference>
<dbReference type="GO" id="GO:0005524">
    <property type="term" value="F:ATP binding"/>
    <property type="evidence" value="ECO:0007669"/>
    <property type="project" value="UniProtKB-UniRule"/>
</dbReference>
<dbReference type="GO" id="GO:0046872">
    <property type="term" value="F:metal ion binding"/>
    <property type="evidence" value="ECO:0007669"/>
    <property type="project" value="UniProtKB-KW"/>
</dbReference>
<dbReference type="GO" id="GO:0008564">
    <property type="term" value="F:protein-exporting ATPase activity"/>
    <property type="evidence" value="ECO:0007669"/>
    <property type="project" value="UniProtKB-EC"/>
</dbReference>
<dbReference type="GO" id="GO:0065002">
    <property type="term" value="P:intracellular protein transmembrane transport"/>
    <property type="evidence" value="ECO:0007669"/>
    <property type="project" value="UniProtKB-UniRule"/>
</dbReference>
<dbReference type="GO" id="GO:0017038">
    <property type="term" value="P:protein import"/>
    <property type="evidence" value="ECO:0007669"/>
    <property type="project" value="InterPro"/>
</dbReference>
<dbReference type="GO" id="GO:0006605">
    <property type="term" value="P:protein targeting"/>
    <property type="evidence" value="ECO:0007669"/>
    <property type="project" value="UniProtKB-UniRule"/>
</dbReference>
<dbReference type="GO" id="GO:0043952">
    <property type="term" value="P:protein transport by the Sec complex"/>
    <property type="evidence" value="ECO:0007669"/>
    <property type="project" value="TreeGrafter"/>
</dbReference>
<dbReference type="CDD" id="cd17928">
    <property type="entry name" value="DEXDc_SecA"/>
    <property type="match status" value="1"/>
</dbReference>
<dbReference type="CDD" id="cd18803">
    <property type="entry name" value="SF2_C_secA"/>
    <property type="match status" value="1"/>
</dbReference>
<dbReference type="FunFam" id="1.10.3060.10:FF:000001">
    <property type="entry name" value="Preprotein translocase subunit SecA"/>
    <property type="match status" value="1"/>
</dbReference>
<dbReference type="FunFam" id="3.40.50.300:FF:000081">
    <property type="entry name" value="Preprotein translocase subunit SecA"/>
    <property type="match status" value="1"/>
</dbReference>
<dbReference type="FunFam" id="3.40.50.300:FF:000113">
    <property type="entry name" value="Preprotein translocase subunit SecA"/>
    <property type="match status" value="1"/>
</dbReference>
<dbReference type="FunFam" id="3.90.1440.10:FF:000001">
    <property type="entry name" value="Preprotein translocase subunit SecA"/>
    <property type="match status" value="1"/>
</dbReference>
<dbReference type="Gene3D" id="1.10.3060.10">
    <property type="entry name" value="Helical scaffold and wing domains of SecA"/>
    <property type="match status" value="1"/>
</dbReference>
<dbReference type="Gene3D" id="3.40.50.300">
    <property type="entry name" value="P-loop containing nucleotide triphosphate hydrolases"/>
    <property type="match status" value="2"/>
</dbReference>
<dbReference type="Gene3D" id="3.90.1440.10">
    <property type="entry name" value="SecA, preprotein cross-linking domain"/>
    <property type="match status" value="1"/>
</dbReference>
<dbReference type="HAMAP" id="MF_01382">
    <property type="entry name" value="SecA"/>
    <property type="match status" value="1"/>
</dbReference>
<dbReference type="InterPro" id="IPR014001">
    <property type="entry name" value="Helicase_ATP-bd"/>
</dbReference>
<dbReference type="InterPro" id="IPR027417">
    <property type="entry name" value="P-loop_NTPase"/>
</dbReference>
<dbReference type="InterPro" id="IPR004027">
    <property type="entry name" value="SEC_C_motif"/>
</dbReference>
<dbReference type="InterPro" id="IPR000185">
    <property type="entry name" value="SecA"/>
</dbReference>
<dbReference type="InterPro" id="IPR020937">
    <property type="entry name" value="SecA_CS"/>
</dbReference>
<dbReference type="InterPro" id="IPR011115">
    <property type="entry name" value="SecA_DEAD"/>
</dbReference>
<dbReference type="InterPro" id="IPR014018">
    <property type="entry name" value="SecA_motor_DEAD"/>
</dbReference>
<dbReference type="InterPro" id="IPR011130">
    <property type="entry name" value="SecA_preprotein_X-link_dom"/>
</dbReference>
<dbReference type="InterPro" id="IPR044722">
    <property type="entry name" value="SecA_SF2_C"/>
</dbReference>
<dbReference type="InterPro" id="IPR011116">
    <property type="entry name" value="SecA_Wing/Scaffold"/>
</dbReference>
<dbReference type="InterPro" id="IPR036266">
    <property type="entry name" value="SecA_Wing/Scaffold_sf"/>
</dbReference>
<dbReference type="InterPro" id="IPR036670">
    <property type="entry name" value="SecA_X-link_sf"/>
</dbReference>
<dbReference type="NCBIfam" id="NF009538">
    <property type="entry name" value="PRK12904.1"/>
    <property type="match status" value="1"/>
</dbReference>
<dbReference type="NCBIfam" id="TIGR00963">
    <property type="entry name" value="secA"/>
    <property type="match status" value="1"/>
</dbReference>
<dbReference type="PANTHER" id="PTHR30612:SF0">
    <property type="entry name" value="CHLOROPLAST PROTEIN-TRANSPORTING ATPASE"/>
    <property type="match status" value="1"/>
</dbReference>
<dbReference type="PANTHER" id="PTHR30612">
    <property type="entry name" value="SECA INNER MEMBRANE COMPONENT OF SEC PROTEIN SECRETION SYSTEM"/>
    <property type="match status" value="1"/>
</dbReference>
<dbReference type="Pfam" id="PF21090">
    <property type="entry name" value="P-loop_SecA"/>
    <property type="match status" value="1"/>
</dbReference>
<dbReference type="Pfam" id="PF02810">
    <property type="entry name" value="SEC-C"/>
    <property type="match status" value="1"/>
</dbReference>
<dbReference type="Pfam" id="PF07517">
    <property type="entry name" value="SecA_DEAD"/>
    <property type="match status" value="1"/>
</dbReference>
<dbReference type="Pfam" id="PF01043">
    <property type="entry name" value="SecA_PP_bind"/>
    <property type="match status" value="1"/>
</dbReference>
<dbReference type="Pfam" id="PF07516">
    <property type="entry name" value="SecA_SW"/>
    <property type="match status" value="1"/>
</dbReference>
<dbReference type="PRINTS" id="PR00906">
    <property type="entry name" value="SECA"/>
</dbReference>
<dbReference type="SMART" id="SM00957">
    <property type="entry name" value="SecA_DEAD"/>
    <property type="match status" value="1"/>
</dbReference>
<dbReference type="SMART" id="SM00958">
    <property type="entry name" value="SecA_PP_bind"/>
    <property type="match status" value="1"/>
</dbReference>
<dbReference type="SUPFAM" id="SSF81886">
    <property type="entry name" value="Helical scaffold and wing domains of SecA"/>
    <property type="match status" value="1"/>
</dbReference>
<dbReference type="SUPFAM" id="SSF52540">
    <property type="entry name" value="P-loop containing nucleoside triphosphate hydrolases"/>
    <property type="match status" value="2"/>
</dbReference>
<dbReference type="SUPFAM" id="SSF81767">
    <property type="entry name" value="Pre-protein crosslinking domain of SecA"/>
    <property type="match status" value="1"/>
</dbReference>
<dbReference type="PROSITE" id="PS01312">
    <property type="entry name" value="SECA"/>
    <property type="match status" value="1"/>
</dbReference>
<dbReference type="PROSITE" id="PS51196">
    <property type="entry name" value="SECA_MOTOR_DEAD"/>
    <property type="match status" value="1"/>
</dbReference>
<protein>
    <recommendedName>
        <fullName evidence="1">Protein translocase subunit SecA</fullName>
        <ecNumber evidence="1">7.4.2.8</ecNumber>
    </recommendedName>
</protein>